<feature type="chain" id="PRO_0000242136" description="Transmembrane protein 106A">
    <location>
        <begin position="1"/>
        <end position="261"/>
    </location>
</feature>
<feature type="transmembrane region" description="Helical" evidence="3">
    <location>
        <begin position="95"/>
        <end position="115"/>
    </location>
</feature>
<gene>
    <name type="primary">TMEM106A</name>
</gene>
<sequence length="261" mass="28828">MGETFSQLASQKDENKLILPPNPAFGSKAASYSSMGNSRPFFSCVPCERAAGAGFVTCPTCQGSGEIPRELEKQLVALIPYGDQRLKPRHTKLSVFLAVSICLVTSSLIIFFLFPRTIAVQPVGLNSSTVATDEANVYLNITSILNISNNNYCPITVTQLTIEVLHLSLVVGQVSHSLLLHIGPLASEQMFYAVTNRINDENTYKICTWLEIKVHHVLLYIQGTLTYSYLSRSEQLVFQSYEYVDCRGNTSVPHLLVSHPP</sequence>
<name>T106A_BOVIN</name>
<comment type="function">
    <text evidence="1 2">Activates macrophages and polarizes them into M1-like macrophages through the activation of the MAPK and NF-kappaB signaling pathway. Upon activation, up-regulates the expression of CD80, CD86, CD69 and MHC II on macrophages, and induces the release of pro-inflammatory cytokines such as TNF, IL1B, IL6, CCL2 and nitric oxide (By similarity). May play a role in inhibition of proliferation and migration (By similarity).</text>
</comment>
<comment type="subcellular location">
    <subcellularLocation>
        <location evidence="1">Cell membrane</location>
        <topology evidence="3">Single-pass membrane protein</topology>
    </subcellularLocation>
</comment>
<comment type="similarity">
    <text evidence="4">Belongs to the TMEM106 family.</text>
</comment>
<protein>
    <recommendedName>
        <fullName>Transmembrane protein 106A</fullName>
    </recommendedName>
</protein>
<keyword id="KW-1003">Cell membrane</keyword>
<keyword id="KW-0391">Immunity</keyword>
<keyword id="KW-0399">Innate immunity</keyword>
<keyword id="KW-0472">Membrane</keyword>
<keyword id="KW-1185">Reference proteome</keyword>
<keyword id="KW-0812">Transmembrane</keyword>
<keyword id="KW-1133">Transmembrane helix</keyword>
<accession>Q5EA90</accession>
<dbReference type="EMBL" id="BT020679">
    <property type="protein sequence ID" value="AAX08696.1"/>
    <property type="molecule type" value="mRNA"/>
</dbReference>
<dbReference type="EMBL" id="BC114088">
    <property type="protein sequence ID" value="AAI14089.1"/>
    <property type="molecule type" value="mRNA"/>
</dbReference>
<dbReference type="RefSeq" id="NP_001014870.1">
    <property type="nucleotide sequence ID" value="NM_001014870.3"/>
</dbReference>
<dbReference type="RefSeq" id="XP_005220744.1">
    <property type="nucleotide sequence ID" value="XM_005220687.3"/>
</dbReference>
<dbReference type="RefSeq" id="XP_005220745.1">
    <property type="nucleotide sequence ID" value="XM_005220688.3"/>
</dbReference>
<dbReference type="RefSeq" id="XP_010814526.1">
    <property type="nucleotide sequence ID" value="XM_010816224.2"/>
</dbReference>
<dbReference type="RefSeq" id="XP_010814527.1">
    <property type="nucleotide sequence ID" value="XM_010816225.2"/>
</dbReference>
<dbReference type="RefSeq" id="XP_059733847.1">
    <property type="nucleotide sequence ID" value="XM_059877864.1"/>
</dbReference>
<dbReference type="RefSeq" id="XP_059733848.1">
    <property type="nucleotide sequence ID" value="XM_059877865.1"/>
</dbReference>
<dbReference type="RefSeq" id="XP_059733849.1">
    <property type="nucleotide sequence ID" value="XM_059877866.1"/>
</dbReference>
<dbReference type="RefSeq" id="XP_059733850.1">
    <property type="nucleotide sequence ID" value="XM_059877867.1"/>
</dbReference>
<dbReference type="FunCoup" id="Q5EA90">
    <property type="interactions" value="129"/>
</dbReference>
<dbReference type="STRING" id="9913.ENSBTAP00000057529"/>
<dbReference type="PaxDb" id="9913-ENSBTAP00000008944"/>
<dbReference type="Ensembl" id="ENSBTAT00000008944.7">
    <property type="protein sequence ID" value="ENSBTAP00000008944.5"/>
    <property type="gene ID" value="ENSBTAG00000006801.7"/>
</dbReference>
<dbReference type="GeneID" id="508269"/>
<dbReference type="KEGG" id="bta:508269"/>
<dbReference type="CTD" id="113277"/>
<dbReference type="VEuPathDB" id="HostDB:ENSBTAG00000006801"/>
<dbReference type="VGNC" id="VGNC:35944">
    <property type="gene designation" value="TMEM106A"/>
</dbReference>
<dbReference type="eggNOG" id="ENOG502RY0I">
    <property type="taxonomic scope" value="Eukaryota"/>
</dbReference>
<dbReference type="GeneTree" id="ENSGT00940000161546"/>
<dbReference type="HOGENOM" id="CLU_089337_1_0_1"/>
<dbReference type="InParanoid" id="Q5EA90"/>
<dbReference type="OMA" id="CSYLCHS"/>
<dbReference type="OrthoDB" id="508875at2759"/>
<dbReference type="TreeFam" id="TF328907"/>
<dbReference type="Proteomes" id="UP000009136">
    <property type="component" value="Chromosome 19"/>
</dbReference>
<dbReference type="Bgee" id="ENSBTAG00000006801">
    <property type="expression patterns" value="Expressed in monocyte and 105 other cell types or tissues"/>
</dbReference>
<dbReference type="GO" id="GO:0005886">
    <property type="term" value="C:plasma membrane"/>
    <property type="evidence" value="ECO:0000250"/>
    <property type="project" value="UniProtKB"/>
</dbReference>
<dbReference type="GO" id="GO:0009101">
    <property type="term" value="P:glycoprotein biosynthetic process"/>
    <property type="evidence" value="ECO:0000250"/>
    <property type="project" value="UniProtKB"/>
</dbReference>
<dbReference type="GO" id="GO:0045087">
    <property type="term" value="P:innate immune response"/>
    <property type="evidence" value="ECO:0007669"/>
    <property type="project" value="UniProtKB-KW"/>
</dbReference>
<dbReference type="GO" id="GO:0042116">
    <property type="term" value="P:macrophage activation"/>
    <property type="evidence" value="ECO:0000250"/>
    <property type="project" value="UniProtKB"/>
</dbReference>
<dbReference type="GO" id="GO:0043123">
    <property type="term" value="P:positive regulation of canonical NF-kappaB signal transduction"/>
    <property type="evidence" value="ECO:0000250"/>
    <property type="project" value="UniProtKB"/>
</dbReference>
<dbReference type="GO" id="GO:0032731">
    <property type="term" value="P:positive regulation of interleukin-1 beta production"/>
    <property type="evidence" value="ECO:0000250"/>
    <property type="project" value="UniProtKB"/>
</dbReference>
<dbReference type="GO" id="GO:0032755">
    <property type="term" value="P:positive regulation of interleukin-6 production"/>
    <property type="evidence" value="ECO:0000250"/>
    <property type="project" value="UniProtKB"/>
</dbReference>
<dbReference type="GO" id="GO:0043410">
    <property type="term" value="P:positive regulation of MAPK cascade"/>
    <property type="evidence" value="ECO:0000250"/>
    <property type="project" value="UniProtKB"/>
</dbReference>
<dbReference type="GO" id="GO:0045348">
    <property type="term" value="P:positive regulation of MHC class II biosynthetic process"/>
    <property type="evidence" value="ECO:0000250"/>
    <property type="project" value="UniProtKB"/>
</dbReference>
<dbReference type="GO" id="GO:1904407">
    <property type="term" value="P:positive regulation of nitric oxide metabolic process"/>
    <property type="evidence" value="ECO:0000250"/>
    <property type="project" value="UniProtKB"/>
</dbReference>
<dbReference type="GO" id="GO:0032760">
    <property type="term" value="P:positive regulation of tumor necrosis factor production"/>
    <property type="evidence" value="ECO:0000250"/>
    <property type="project" value="UniProtKB"/>
</dbReference>
<dbReference type="InterPro" id="IPR009790">
    <property type="entry name" value="TMEM106"/>
</dbReference>
<dbReference type="InterPro" id="IPR048509">
    <property type="entry name" value="TMEM106_C"/>
</dbReference>
<dbReference type="InterPro" id="IPR048511">
    <property type="entry name" value="TMEM106_N"/>
</dbReference>
<dbReference type="PANTHER" id="PTHR28556:SF3">
    <property type="entry name" value="TRANSMEMBRANE PROTEIN 106A"/>
    <property type="match status" value="1"/>
</dbReference>
<dbReference type="PANTHER" id="PTHR28556">
    <property type="entry name" value="TRANSMEMBRANE PROTEIN 106B"/>
    <property type="match status" value="1"/>
</dbReference>
<dbReference type="Pfam" id="PF07092">
    <property type="entry name" value="TMEM106"/>
    <property type="match status" value="1"/>
</dbReference>
<dbReference type="Pfam" id="PF21002">
    <property type="entry name" value="TMEM106_N"/>
    <property type="match status" value="1"/>
</dbReference>
<proteinExistence type="evidence at transcript level"/>
<evidence type="ECO:0000250" key="1">
    <source>
        <dbReference type="UniProtKB" id="Q8VC04"/>
    </source>
</evidence>
<evidence type="ECO:0000250" key="2">
    <source>
        <dbReference type="UniProtKB" id="Q96A25"/>
    </source>
</evidence>
<evidence type="ECO:0000255" key="3"/>
<evidence type="ECO:0000305" key="4"/>
<reference key="1">
    <citation type="journal article" date="2005" name="BMC Genomics">
        <title>Characterization of 954 bovine full-CDS cDNA sequences.</title>
        <authorList>
            <person name="Harhay G.P."/>
            <person name="Sonstegard T.S."/>
            <person name="Keele J.W."/>
            <person name="Heaton M.P."/>
            <person name="Clawson M.L."/>
            <person name="Snelling W.M."/>
            <person name="Wiedmann R.T."/>
            <person name="Van Tassell C.P."/>
            <person name="Smith T.P.L."/>
        </authorList>
    </citation>
    <scope>NUCLEOTIDE SEQUENCE [LARGE SCALE MRNA]</scope>
</reference>
<reference key="2">
    <citation type="submission" date="2006-02" db="EMBL/GenBank/DDBJ databases">
        <authorList>
            <consortium name="NIH - Mammalian Gene Collection (MGC) project"/>
        </authorList>
    </citation>
    <scope>NUCLEOTIDE SEQUENCE [LARGE SCALE MRNA]</scope>
    <source>
        <strain>Hereford</strain>
        <tissue>Heart ventricle</tissue>
    </source>
</reference>
<organism>
    <name type="scientific">Bos taurus</name>
    <name type="common">Bovine</name>
    <dbReference type="NCBI Taxonomy" id="9913"/>
    <lineage>
        <taxon>Eukaryota</taxon>
        <taxon>Metazoa</taxon>
        <taxon>Chordata</taxon>
        <taxon>Craniata</taxon>
        <taxon>Vertebrata</taxon>
        <taxon>Euteleostomi</taxon>
        <taxon>Mammalia</taxon>
        <taxon>Eutheria</taxon>
        <taxon>Laurasiatheria</taxon>
        <taxon>Artiodactyla</taxon>
        <taxon>Ruminantia</taxon>
        <taxon>Pecora</taxon>
        <taxon>Bovidae</taxon>
        <taxon>Bovinae</taxon>
        <taxon>Bos</taxon>
    </lineage>
</organism>